<keyword id="KW-0066">ATP synthesis</keyword>
<keyword id="KW-0997">Cell inner membrane</keyword>
<keyword id="KW-1003">Cell membrane</keyword>
<keyword id="KW-0139">CF(1)</keyword>
<keyword id="KW-0375">Hydrogen ion transport</keyword>
<keyword id="KW-0406">Ion transport</keyword>
<keyword id="KW-0472">Membrane</keyword>
<keyword id="KW-1185">Reference proteome</keyword>
<keyword id="KW-0813">Transport</keyword>
<accession>A1K1S1</accession>
<proteinExistence type="inferred from homology"/>
<gene>
    <name evidence="1" type="primary">atpG</name>
    <name type="ordered locus">azo0158</name>
</gene>
<protein>
    <recommendedName>
        <fullName evidence="1">ATP synthase gamma chain</fullName>
    </recommendedName>
    <alternativeName>
        <fullName evidence="1">ATP synthase F1 sector gamma subunit</fullName>
    </alternativeName>
    <alternativeName>
        <fullName evidence="1">F-ATPase gamma subunit</fullName>
    </alternativeName>
</protein>
<organism>
    <name type="scientific">Azoarcus sp. (strain BH72)</name>
    <dbReference type="NCBI Taxonomy" id="418699"/>
    <lineage>
        <taxon>Bacteria</taxon>
        <taxon>Pseudomonadati</taxon>
        <taxon>Pseudomonadota</taxon>
        <taxon>Betaproteobacteria</taxon>
        <taxon>Rhodocyclales</taxon>
        <taxon>Zoogloeaceae</taxon>
        <taxon>Azoarcus</taxon>
    </lineage>
</organism>
<reference key="1">
    <citation type="journal article" date="2006" name="Nat. Biotechnol.">
        <title>Complete genome of the mutualistic, N2-fixing grass endophyte Azoarcus sp. strain BH72.</title>
        <authorList>
            <person name="Krause A."/>
            <person name="Ramakumar A."/>
            <person name="Bartels D."/>
            <person name="Battistoni F."/>
            <person name="Bekel T."/>
            <person name="Boch J."/>
            <person name="Boehm M."/>
            <person name="Friedrich F."/>
            <person name="Hurek T."/>
            <person name="Krause L."/>
            <person name="Linke B."/>
            <person name="McHardy A.C."/>
            <person name="Sarkar A."/>
            <person name="Schneiker S."/>
            <person name="Syed A.A."/>
            <person name="Thauer R."/>
            <person name="Vorhoelter F.-J."/>
            <person name="Weidner S."/>
            <person name="Puehler A."/>
            <person name="Reinhold-Hurek B."/>
            <person name="Kaiser O."/>
            <person name="Goesmann A."/>
        </authorList>
    </citation>
    <scope>NUCLEOTIDE SEQUENCE [LARGE SCALE GENOMIC DNA]</scope>
    <source>
        <strain>BH72</strain>
    </source>
</reference>
<dbReference type="EMBL" id="AM406670">
    <property type="protein sequence ID" value="CAL92776.1"/>
    <property type="molecule type" value="Genomic_DNA"/>
</dbReference>
<dbReference type="RefSeq" id="WP_011763894.1">
    <property type="nucleotide sequence ID" value="NC_008702.1"/>
</dbReference>
<dbReference type="SMR" id="A1K1S1"/>
<dbReference type="STRING" id="62928.azo0158"/>
<dbReference type="KEGG" id="aoa:dqs_0167"/>
<dbReference type="KEGG" id="azo:azo0158"/>
<dbReference type="eggNOG" id="COG0224">
    <property type="taxonomic scope" value="Bacteria"/>
</dbReference>
<dbReference type="HOGENOM" id="CLU_050669_0_1_4"/>
<dbReference type="OrthoDB" id="9812769at2"/>
<dbReference type="Proteomes" id="UP000002588">
    <property type="component" value="Chromosome"/>
</dbReference>
<dbReference type="GO" id="GO:0005886">
    <property type="term" value="C:plasma membrane"/>
    <property type="evidence" value="ECO:0007669"/>
    <property type="project" value="UniProtKB-SubCell"/>
</dbReference>
<dbReference type="GO" id="GO:0045259">
    <property type="term" value="C:proton-transporting ATP synthase complex"/>
    <property type="evidence" value="ECO:0007669"/>
    <property type="project" value="UniProtKB-KW"/>
</dbReference>
<dbReference type="GO" id="GO:0005524">
    <property type="term" value="F:ATP binding"/>
    <property type="evidence" value="ECO:0007669"/>
    <property type="project" value="UniProtKB-UniRule"/>
</dbReference>
<dbReference type="GO" id="GO:0046933">
    <property type="term" value="F:proton-transporting ATP synthase activity, rotational mechanism"/>
    <property type="evidence" value="ECO:0007669"/>
    <property type="project" value="UniProtKB-UniRule"/>
</dbReference>
<dbReference type="GO" id="GO:0042777">
    <property type="term" value="P:proton motive force-driven plasma membrane ATP synthesis"/>
    <property type="evidence" value="ECO:0007669"/>
    <property type="project" value="UniProtKB-UniRule"/>
</dbReference>
<dbReference type="CDD" id="cd12151">
    <property type="entry name" value="F1-ATPase_gamma"/>
    <property type="match status" value="1"/>
</dbReference>
<dbReference type="FunFam" id="1.10.287.80:FF:000005">
    <property type="entry name" value="ATP synthase gamma chain"/>
    <property type="match status" value="1"/>
</dbReference>
<dbReference type="Gene3D" id="3.40.1380.10">
    <property type="match status" value="1"/>
</dbReference>
<dbReference type="Gene3D" id="1.10.287.80">
    <property type="entry name" value="ATP synthase, gamma subunit, helix hairpin domain"/>
    <property type="match status" value="1"/>
</dbReference>
<dbReference type="HAMAP" id="MF_00815">
    <property type="entry name" value="ATP_synth_gamma_bact"/>
    <property type="match status" value="1"/>
</dbReference>
<dbReference type="InterPro" id="IPR035968">
    <property type="entry name" value="ATP_synth_F1_ATPase_gsu"/>
</dbReference>
<dbReference type="InterPro" id="IPR000131">
    <property type="entry name" value="ATP_synth_F1_gsu"/>
</dbReference>
<dbReference type="InterPro" id="IPR023632">
    <property type="entry name" value="ATP_synth_F1_gsu_CS"/>
</dbReference>
<dbReference type="NCBIfam" id="TIGR01146">
    <property type="entry name" value="ATPsyn_F1gamma"/>
    <property type="match status" value="1"/>
</dbReference>
<dbReference type="NCBIfam" id="NF004144">
    <property type="entry name" value="PRK05621.1-1"/>
    <property type="match status" value="1"/>
</dbReference>
<dbReference type="PANTHER" id="PTHR11693">
    <property type="entry name" value="ATP SYNTHASE GAMMA CHAIN"/>
    <property type="match status" value="1"/>
</dbReference>
<dbReference type="PANTHER" id="PTHR11693:SF22">
    <property type="entry name" value="ATP SYNTHASE SUBUNIT GAMMA, MITOCHONDRIAL"/>
    <property type="match status" value="1"/>
</dbReference>
<dbReference type="Pfam" id="PF00231">
    <property type="entry name" value="ATP-synt"/>
    <property type="match status" value="1"/>
</dbReference>
<dbReference type="PRINTS" id="PR00126">
    <property type="entry name" value="ATPASEGAMMA"/>
</dbReference>
<dbReference type="SUPFAM" id="SSF52943">
    <property type="entry name" value="ATP synthase (F1-ATPase), gamma subunit"/>
    <property type="match status" value="1"/>
</dbReference>
<dbReference type="PROSITE" id="PS00153">
    <property type="entry name" value="ATPASE_GAMMA"/>
    <property type="match status" value="1"/>
</dbReference>
<comment type="function">
    <text evidence="1">Produces ATP from ADP in the presence of a proton gradient across the membrane. The gamma chain is believed to be important in regulating ATPase activity and the flow of protons through the CF(0) complex.</text>
</comment>
<comment type="subunit">
    <text evidence="1">F-type ATPases have 2 components, CF(1) - the catalytic core - and CF(0) - the membrane proton channel. CF(1) has five subunits: alpha(3), beta(3), gamma(1), delta(1), epsilon(1). CF(0) has three main subunits: a, b and c.</text>
</comment>
<comment type="subcellular location">
    <subcellularLocation>
        <location evidence="1">Cell inner membrane</location>
        <topology evidence="1">Peripheral membrane protein</topology>
    </subcellularLocation>
</comment>
<comment type="similarity">
    <text evidence="1">Belongs to the ATPase gamma chain family.</text>
</comment>
<feature type="chain" id="PRO_1000053156" description="ATP synthase gamma chain">
    <location>
        <begin position="1"/>
        <end position="289"/>
    </location>
</feature>
<name>ATPG_AZOSB</name>
<sequence>MASGKEIRTKIKSVQNTRKITKAMEMVAASKMRKAQDRMRAARPYADKIRRLAANLSQANVTDYKHPFLVRKDQVKRVGLILVTTDKGLCGGLNTNVQRVAVNAMKEWEAAGATEIRACCIGNKGFGFMQRIGAKVVSHVTQLGDTPHLEKLIGPVKVMLDAFQNGELDAVYVAYTRFINTMKQEPQLEQLLPLTGEKLGTPDNSWDYLYEPDPQVVIDELLVRYVEALVYQAVAENMASEQSARMVAMKAASDNAKNVIGELQLVYNKTRQAAITKELSEIVGGAAAV</sequence>
<evidence type="ECO:0000255" key="1">
    <source>
        <dbReference type="HAMAP-Rule" id="MF_00815"/>
    </source>
</evidence>